<keyword id="KW-0324">Glycolysis</keyword>
<keyword id="KW-0413">Isomerase</keyword>
<keyword id="KW-0464">Manganese</keyword>
<keyword id="KW-0479">Metal-binding</keyword>
<keyword id="KW-1185">Reference proteome</keyword>
<name>GPMI_LAWIP</name>
<dbReference type="EC" id="5.4.2.12" evidence="1"/>
<dbReference type="EMBL" id="AM180252">
    <property type="protein sequence ID" value="CAJ55069.1"/>
    <property type="molecule type" value="Genomic_DNA"/>
</dbReference>
<dbReference type="RefSeq" id="WP_011527098.1">
    <property type="nucleotide sequence ID" value="NC_008011.1"/>
</dbReference>
<dbReference type="SMR" id="Q1MPK8"/>
<dbReference type="STRING" id="363253.LI1015"/>
<dbReference type="KEGG" id="lip:LI1015"/>
<dbReference type="eggNOG" id="COG0696">
    <property type="taxonomic scope" value="Bacteria"/>
</dbReference>
<dbReference type="HOGENOM" id="CLU_026099_2_0_7"/>
<dbReference type="OrthoDB" id="9800863at2"/>
<dbReference type="UniPathway" id="UPA00109">
    <property type="reaction ID" value="UER00186"/>
</dbReference>
<dbReference type="Proteomes" id="UP000002430">
    <property type="component" value="Chromosome"/>
</dbReference>
<dbReference type="GO" id="GO:0005829">
    <property type="term" value="C:cytosol"/>
    <property type="evidence" value="ECO:0007669"/>
    <property type="project" value="TreeGrafter"/>
</dbReference>
<dbReference type="GO" id="GO:0030145">
    <property type="term" value="F:manganese ion binding"/>
    <property type="evidence" value="ECO:0007669"/>
    <property type="project" value="UniProtKB-UniRule"/>
</dbReference>
<dbReference type="GO" id="GO:0004619">
    <property type="term" value="F:phosphoglycerate mutase activity"/>
    <property type="evidence" value="ECO:0007669"/>
    <property type="project" value="UniProtKB-EC"/>
</dbReference>
<dbReference type="GO" id="GO:0006007">
    <property type="term" value="P:glucose catabolic process"/>
    <property type="evidence" value="ECO:0007669"/>
    <property type="project" value="InterPro"/>
</dbReference>
<dbReference type="GO" id="GO:0006096">
    <property type="term" value="P:glycolytic process"/>
    <property type="evidence" value="ECO:0007669"/>
    <property type="project" value="UniProtKB-UniRule"/>
</dbReference>
<dbReference type="CDD" id="cd16010">
    <property type="entry name" value="iPGM"/>
    <property type="match status" value="1"/>
</dbReference>
<dbReference type="FunFam" id="3.40.1450.10:FF:000002">
    <property type="entry name" value="2,3-bisphosphoglycerate-independent phosphoglycerate mutase"/>
    <property type="match status" value="1"/>
</dbReference>
<dbReference type="Gene3D" id="3.40.720.10">
    <property type="entry name" value="Alkaline Phosphatase, subunit A"/>
    <property type="match status" value="1"/>
</dbReference>
<dbReference type="Gene3D" id="3.40.1450.10">
    <property type="entry name" value="BPG-independent phosphoglycerate mutase, domain B"/>
    <property type="match status" value="1"/>
</dbReference>
<dbReference type="HAMAP" id="MF_01038">
    <property type="entry name" value="GpmI"/>
    <property type="match status" value="1"/>
</dbReference>
<dbReference type="InterPro" id="IPR017850">
    <property type="entry name" value="Alkaline_phosphatase_core_sf"/>
</dbReference>
<dbReference type="InterPro" id="IPR011258">
    <property type="entry name" value="BPG-indep_PGM_N"/>
</dbReference>
<dbReference type="InterPro" id="IPR006124">
    <property type="entry name" value="Metalloenzyme"/>
</dbReference>
<dbReference type="InterPro" id="IPR036646">
    <property type="entry name" value="PGAM_B_sf"/>
</dbReference>
<dbReference type="InterPro" id="IPR005995">
    <property type="entry name" value="Pgm_bpd_ind"/>
</dbReference>
<dbReference type="NCBIfam" id="TIGR01307">
    <property type="entry name" value="pgm_bpd_ind"/>
    <property type="match status" value="1"/>
</dbReference>
<dbReference type="PANTHER" id="PTHR31637">
    <property type="entry name" value="2,3-BISPHOSPHOGLYCERATE-INDEPENDENT PHOSPHOGLYCERATE MUTASE"/>
    <property type="match status" value="1"/>
</dbReference>
<dbReference type="PANTHER" id="PTHR31637:SF0">
    <property type="entry name" value="2,3-BISPHOSPHOGLYCERATE-INDEPENDENT PHOSPHOGLYCERATE MUTASE"/>
    <property type="match status" value="1"/>
</dbReference>
<dbReference type="Pfam" id="PF06415">
    <property type="entry name" value="iPGM_N"/>
    <property type="match status" value="1"/>
</dbReference>
<dbReference type="Pfam" id="PF01676">
    <property type="entry name" value="Metalloenzyme"/>
    <property type="match status" value="1"/>
</dbReference>
<dbReference type="PIRSF" id="PIRSF001492">
    <property type="entry name" value="IPGAM"/>
    <property type="match status" value="1"/>
</dbReference>
<dbReference type="SUPFAM" id="SSF64158">
    <property type="entry name" value="2,3-Bisphosphoglycerate-independent phosphoglycerate mutase, substrate-binding domain"/>
    <property type="match status" value="1"/>
</dbReference>
<dbReference type="SUPFAM" id="SSF53649">
    <property type="entry name" value="Alkaline phosphatase-like"/>
    <property type="match status" value="1"/>
</dbReference>
<feature type="chain" id="PRO_1000063978" description="2,3-bisphosphoglycerate-independent phosphoglycerate mutase">
    <location>
        <begin position="1"/>
        <end position="510"/>
    </location>
</feature>
<feature type="active site" description="Phosphoserine intermediate" evidence="1">
    <location>
        <position position="62"/>
    </location>
</feature>
<feature type="binding site" evidence="1">
    <location>
        <position position="12"/>
    </location>
    <ligand>
        <name>Mn(2+)</name>
        <dbReference type="ChEBI" id="CHEBI:29035"/>
        <label>2</label>
    </ligand>
</feature>
<feature type="binding site" evidence="1">
    <location>
        <position position="62"/>
    </location>
    <ligand>
        <name>Mn(2+)</name>
        <dbReference type="ChEBI" id="CHEBI:29035"/>
        <label>2</label>
    </ligand>
</feature>
<feature type="binding site" evidence="1">
    <location>
        <position position="123"/>
    </location>
    <ligand>
        <name>substrate</name>
    </ligand>
</feature>
<feature type="binding site" evidence="1">
    <location>
        <begin position="152"/>
        <end position="153"/>
    </location>
    <ligand>
        <name>substrate</name>
    </ligand>
</feature>
<feature type="binding site" evidence="1">
    <location>
        <position position="184"/>
    </location>
    <ligand>
        <name>substrate</name>
    </ligand>
</feature>
<feature type="binding site" evidence="1">
    <location>
        <position position="190"/>
    </location>
    <ligand>
        <name>substrate</name>
    </ligand>
</feature>
<feature type="binding site" evidence="1">
    <location>
        <begin position="257"/>
        <end position="260"/>
    </location>
    <ligand>
        <name>substrate</name>
    </ligand>
</feature>
<feature type="binding site" evidence="1">
    <location>
        <position position="331"/>
    </location>
    <ligand>
        <name>substrate</name>
    </ligand>
</feature>
<feature type="binding site" evidence="1">
    <location>
        <position position="399"/>
    </location>
    <ligand>
        <name>Mn(2+)</name>
        <dbReference type="ChEBI" id="CHEBI:29035"/>
        <label>1</label>
    </ligand>
</feature>
<feature type="binding site" evidence="1">
    <location>
        <position position="403"/>
    </location>
    <ligand>
        <name>Mn(2+)</name>
        <dbReference type="ChEBI" id="CHEBI:29035"/>
        <label>1</label>
    </ligand>
</feature>
<feature type="binding site" evidence="1">
    <location>
        <position position="440"/>
    </location>
    <ligand>
        <name>Mn(2+)</name>
        <dbReference type="ChEBI" id="CHEBI:29035"/>
        <label>2</label>
    </ligand>
</feature>
<feature type="binding site" evidence="1">
    <location>
        <position position="441"/>
    </location>
    <ligand>
        <name>Mn(2+)</name>
        <dbReference type="ChEBI" id="CHEBI:29035"/>
        <label>2</label>
    </ligand>
</feature>
<feature type="binding site" evidence="1">
    <location>
        <position position="458"/>
    </location>
    <ligand>
        <name>Mn(2+)</name>
        <dbReference type="ChEBI" id="CHEBI:29035"/>
        <label>1</label>
    </ligand>
</feature>
<evidence type="ECO:0000255" key="1">
    <source>
        <dbReference type="HAMAP-Rule" id="MF_01038"/>
    </source>
</evidence>
<accession>Q1MPK8</accession>
<organism>
    <name type="scientific">Lawsonia intracellularis (strain PHE/MN1-00)</name>
    <dbReference type="NCBI Taxonomy" id="363253"/>
    <lineage>
        <taxon>Bacteria</taxon>
        <taxon>Pseudomonadati</taxon>
        <taxon>Thermodesulfobacteriota</taxon>
        <taxon>Desulfovibrionia</taxon>
        <taxon>Desulfovibrionales</taxon>
        <taxon>Desulfovibrionaceae</taxon>
        <taxon>Lawsonia</taxon>
    </lineage>
</organism>
<gene>
    <name evidence="1" type="primary">gpmI</name>
    <name type="ordered locus">LI1015</name>
</gene>
<comment type="function">
    <text evidence="1">Catalyzes the interconversion of 2-phosphoglycerate and 3-phosphoglycerate.</text>
</comment>
<comment type="catalytic activity">
    <reaction evidence="1">
        <text>(2R)-2-phosphoglycerate = (2R)-3-phosphoglycerate</text>
        <dbReference type="Rhea" id="RHEA:15901"/>
        <dbReference type="ChEBI" id="CHEBI:58272"/>
        <dbReference type="ChEBI" id="CHEBI:58289"/>
        <dbReference type="EC" id="5.4.2.12"/>
    </reaction>
</comment>
<comment type="cofactor">
    <cofactor evidence="1">
        <name>Mn(2+)</name>
        <dbReference type="ChEBI" id="CHEBI:29035"/>
    </cofactor>
    <text evidence="1">Binds 2 manganese ions per subunit.</text>
</comment>
<comment type="pathway">
    <text evidence="1">Carbohydrate degradation; glycolysis; pyruvate from D-glyceraldehyde 3-phosphate: step 3/5.</text>
</comment>
<comment type="subunit">
    <text evidence="1">Monomer.</text>
</comment>
<comment type="similarity">
    <text evidence="1">Belongs to the BPG-independent phosphoglycerate mutase family.</text>
</comment>
<sequence length="510" mass="55847">MNVVPILLLILDGYGLAPDSTGNAAKLAFTPNIDRMLAMSGGTQIHASGRAVGLPDGYMGNSEVGHLNIGAGRVVYQQMTRIDVAIENKELDSNPILLDLFTKVKSSNGRLHLLGLLSNGGVHSHIRHLEALLSIAKEHNIQVILHPFMDGRDTGPKDGLKFMKEIVSFLTSTSSGVIGSFCGRFYAMDRDKRWERIKLAWDAIVHGVGLHVEDSVKALEQAYASGETDEFIKPRVMGNSSVNCVQDNDAVLFFNFRADRARELVSAFILPDFNGFDRGRVPHLSGIATMTMYDKEFNIPVLFNHENITKTLGEVVSALGLLQLRIAETEKYAHVTYFFSGGREEVFTGEERILVQSPRDVATYDLKPEMSVMEVTDRLLTAWNSKKFSLIVCNLANPDMVGHTGNIKASISALEAVDNCVGRIEKAVAEQHGCFILTADHGNVEEMLDKSGQPQTAHSCNPVPLIAIYDGKPLNLKESGKLGDIAPTILSIWDVSIPNEMTGNNLLSSE</sequence>
<reference key="1">
    <citation type="submission" date="2005-11" db="EMBL/GenBank/DDBJ databases">
        <title>The complete genome sequence of Lawsonia intracellularis: the causative agent of proliferative enteropathy.</title>
        <authorList>
            <person name="Kaur K."/>
            <person name="Zhang Q."/>
            <person name="Beckler D."/>
            <person name="Munir S."/>
            <person name="Li L."/>
            <person name="Kinsley K."/>
            <person name="Herron L."/>
            <person name="Peterson A."/>
            <person name="May B."/>
            <person name="Singh S."/>
            <person name="Gebhart C."/>
            <person name="Kapur V."/>
        </authorList>
    </citation>
    <scope>NUCLEOTIDE SEQUENCE [LARGE SCALE GENOMIC DNA]</scope>
    <source>
        <strain>PHE/MN1-00</strain>
    </source>
</reference>
<protein>
    <recommendedName>
        <fullName evidence="1">2,3-bisphosphoglycerate-independent phosphoglycerate mutase</fullName>
        <shortName evidence="1">BPG-independent PGAM</shortName>
        <shortName evidence="1">Phosphoglyceromutase</shortName>
        <shortName evidence="1">iPGM</shortName>
        <ecNumber evidence="1">5.4.2.12</ecNumber>
    </recommendedName>
</protein>
<proteinExistence type="inferred from homology"/>